<evidence type="ECO:0000255" key="1">
    <source>
        <dbReference type="HAMAP-Rule" id="MF_03219"/>
    </source>
</evidence>
<evidence type="ECO:0000269" key="2">
    <source>
    </source>
</evidence>
<evidence type="ECO:0000303" key="3">
    <source>
    </source>
</evidence>
<evidence type="ECO:0000305" key="4">
    <source>
    </source>
</evidence>
<protein>
    <recommendedName>
        <fullName evidence="4">Succinate--CoA ligase [ADP-forming] subunit beta, hydrogenosomal</fullName>
        <ecNumber evidence="1">6.2.1.5</ecNumber>
    </recommendedName>
    <alternativeName>
        <fullName evidence="1 3">Succinyl-CoA synthetase beta chain</fullName>
        <shortName evidence="1">SCS-beta</shortName>
    </alternativeName>
</protein>
<feature type="transit peptide" description="Hydrogenosome">
    <location>
        <begin position="1"/>
        <end position="27"/>
    </location>
</feature>
<feature type="chain" id="PRO_0000033360" description="Succinate--CoA ligase [ADP-forming] subunit beta, hydrogenosomal">
    <location>
        <begin position="28"/>
        <end position="437"/>
    </location>
</feature>
<feature type="domain" description="ATP-grasp" evidence="1">
    <location>
        <begin position="36"/>
        <end position="278"/>
    </location>
</feature>
<feature type="binding site" evidence="1">
    <location>
        <position position="73"/>
    </location>
    <ligand>
        <name>ATP</name>
        <dbReference type="ChEBI" id="CHEBI:30616"/>
    </ligand>
</feature>
<feature type="binding site" evidence="1">
    <location>
        <begin position="80"/>
        <end position="82"/>
    </location>
    <ligand>
        <name>ATP</name>
        <dbReference type="ChEBI" id="CHEBI:30616"/>
    </ligand>
</feature>
<feature type="binding site" evidence="1">
    <location>
        <position position="141"/>
    </location>
    <ligand>
        <name>ATP</name>
        <dbReference type="ChEBI" id="CHEBI:30616"/>
    </ligand>
</feature>
<feature type="binding site" evidence="1">
    <location>
        <position position="233"/>
    </location>
    <ligand>
        <name>Mg(2+)</name>
        <dbReference type="ChEBI" id="CHEBI:18420"/>
    </ligand>
</feature>
<feature type="binding site" evidence="1">
    <location>
        <position position="247"/>
    </location>
    <ligand>
        <name>Mg(2+)</name>
        <dbReference type="ChEBI" id="CHEBI:18420"/>
    </ligand>
</feature>
<feature type="binding site" evidence="1">
    <location>
        <position position="299"/>
    </location>
    <ligand>
        <name>substrate</name>
        <note>ligand shared with subunit alpha</note>
    </ligand>
</feature>
<feature type="binding site" evidence="1">
    <location>
        <begin position="356"/>
        <end position="358"/>
    </location>
    <ligand>
        <name>substrate</name>
        <note>ligand shared with subunit alpha</note>
    </ligand>
</feature>
<organism>
    <name type="scientific">Neocallimastix frontalis</name>
    <name type="common">Rumen fungus</name>
    <dbReference type="NCBI Taxonomy" id="4757"/>
    <lineage>
        <taxon>Eukaryota</taxon>
        <taxon>Fungi</taxon>
        <taxon>Fungi incertae sedis</taxon>
        <taxon>Chytridiomycota</taxon>
        <taxon>Chytridiomycota incertae sedis</taxon>
        <taxon>Neocallimastigomycetes</taxon>
        <taxon>Neocallimastigales</taxon>
        <taxon>Neocallimastigaceae</taxon>
        <taxon>Neocallimastix</taxon>
    </lineage>
</organism>
<dbReference type="EC" id="6.2.1.5" evidence="1"/>
<dbReference type="EMBL" id="X84222">
    <property type="protein sequence ID" value="CAB41451.1"/>
    <property type="molecule type" value="mRNA"/>
</dbReference>
<dbReference type="PIR" id="S52384">
    <property type="entry name" value="S52384"/>
</dbReference>
<dbReference type="SMR" id="P53587"/>
<dbReference type="UniPathway" id="UPA00223">
    <property type="reaction ID" value="UER00999"/>
</dbReference>
<dbReference type="GO" id="GO:0042566">
    <property type="term" value="C:hydrogenosome"/>
    <property type="evidence" value="ECO:0007669"/>
    <property type="project" value="UniProtKB-SubCell"/>
</dbReference>
<dbReference type="GO" id="GO:0005739">
    <property type="term" value="C:mitochondrion"/>
    <property type="evidence" value="ECO:0007669"/>
    <property type="project" value="TreeGrafter"/>
</dbReference>
<dbReference type="GO" id="GO:0042709">
    <property type="term" value="C:succinate-CoA ligase complex"/>
    <property type="evidence" value="ECO:0007669"/>
    <property type="project" value="TreeGrafter"/>
</dbReference>
<dbReference type="GO" id="GO:0005524">
    <property type="term" value="F:ATP binding"/>
    <property type="evidence" value="ECO:0007669"/>
    <property type="project" value="UniProtKB-UniRule"/>
</dbReference>
<dbReference type="GO" id="GO:0000287">
    <property type="term" value="F:magnesium ion binding"/>
    <property type="evidence" value="ECO:0007669"/>
    <property type="project" value="UniProtKB-UniRule"/>
</dbReference>
<dbReference type="GO" id="GO:0004775">
    <property type="term" value="F:succinate-CoA ligase (ADP-forming) activity"/>
    <property type="evidence" value="ECO:0007669"/>
    <property type="project" value="UniProtKB-UniRule"/>
</dbReference>
<dbReference type="GO" id="GO:0006104">
    <property type="term" value="P:succinyl-CoA metabolic process"/>
    <property type="evidence" value="ECO:0007669"/>
    <property type="project" value="TreeGrafter"/>
</dbReference>
<dbReference type="GO" id="GO:0006099">
    <property type="term" value="P:tricarboxylic acid cycle"/>
    <property type="evidence" value="ECO:0007669"/>
    <property type="project" value="UniProtKB-UniRule"/>
</dbReference>
<dbReference type="FunFam" id="3.30.470.20:FF:000002">
    <property type="entry name" value="Succinate--CoA ligase [ADP-forming] subunit beta"/>
    <property type="match status" value="1"/>
</dbReference>
<dbReference type="FunFam" id="3.40.50.261:FF:000001">
    <property type="entry name" value="Succinate--CoA ligase [ADP-forming] subunit beta"/>
    <property type="match status" value="1"/>
</dbReference>
<dbReference type="FunFam" id="3.30.1490.20:FF:000004">
    <property type="entry name" value="Succinate--CoA ligase [ADP-forming] subunit beta, mitochondrial"/>
    <property type="match status" value="1"/>
</dbReference>
<dbReference type="Gene3D" id="3.30.1490.20">
    <property type="entry name" value="ATP-grasp fold, A domain"/>
    <property type="match status" value="1"/>
</dbReference>
<dbReference type="Gene3D" id="3.30.470.20">
    <property type="entry name" value="ATP-grasp fold, B domain"/>
    <property type="match status" value="1"/>
</dbReference>
<dbReference type="Gene3D" id="3.40.50.261">
    <property type="entry name" value="Succinyl-CoA synthetase domains"/>
    <property type="match status" value="1"/>
</dbReference>
<dbReference type="HAMAP" id="MF_00558">
    <property type="entry name" value="Succ_CoA_beta"/>
    <property type="match status" value="1"/>
</dbReference>
<dbReference type="InterPro" id="IPR013650">
    <property type="entry name" value="ATP-grasp_succ-CoA_synth-type"/>
</dbReference>
<dbReference type="InterPro" id="IPR013815">
    <property type="entry name" value="ATP_grasp_subdomain_1"/>
</dbReference>
<dbReference type="InterPro" id="IPR017866">
    <property type="entry name" value="Succ-CoA_synthase_bsu_CS"/>
</dbReference>
<dbReference type="InterPro" id="IPR005811">
    <property type="entry name" value="SUCC_ACL_C"/>
</dbReference>
<dbReference type="InterPro" id="IPR005809">
    <property type="entry name" value="Succ_CoA_ligase-like_bsu"/>
</dbReference>
<dbReference type="InterPro" id="IPR016102">
    <property type="entry name" value="Succinyl-CoA_synth-like"/>
</dbReference>
<dbReference type="NCBIfam" id="NF001913">
    <property type="entry name" value="PRK00696.1"/>
    <property type="match status" value="1"/>
</dbReference>
<dbReference type="NCBIfam" id="TIGR01016">
    <property type="entry name" value="sucCoAbeta"/>
    <property type="match status" value="1"/>
</dbReference>
<dbReference type="PANTHER" id="PTHR11815:SF1">
    <property type="entry name" value="SUCCINATE--COA LIGASE [ADP-FORMING] SUBUNIT BETA, MITOCHONDRIAL"/>
    <property type="match status" value="1"/>
</dbReference>
<dbReference type="PANTHER" id="PTHR11815">
    <property type="entry name" value="SUCCINYL-COA SYNTHETASE BETA CHAIN"/>
    <property type="match status" value="1"/>
</dbReference>
<dbReference type="Pfam" id="PF08442">
    <property type="entry name" value="ATP-grasp_2"/>
    <property type="match status" value="1"/>
</dbReference>
<dbReference type="Pfam" id="PF00549">
    <property type="entry name" value="Ligase_CoA"/>
    <property type="match status" value="1"/>
</dbReference>
<dbReference type="PIRSF" id="PIRSF001554">
    <property type="entry name" value="SucCS_beta"/>
    <property type="match status" value="1"/>
</dbReference>
<dbReference type="SUPFAM" id="SSF56059">
    <property type="entry name" value="Glutathione synthetase ATP-binding domain-like"/>
    <property type="match status" value="1"/>
</dbReference>
<dbReference type="SUPFAM" id="SSF52210">
    <property type="entry name" value="Succinyl-CoA synthetase domains"/>
    <property type="match status" value="1"/>
</dbReference>
<dbReference type="PROSITE" id="PS01217">
    <property type="entry name" value="SUCCINYL_COA_LIG_3"/>
    <property type="match status" value="1"/>
</dbReference>
<accession>P53587</accession>
<sequence length="437" mass="47153">MLANVTRSTSKAAPALASIAQTAQKRFLSVHEYCSMNLLHEYNVNAPKGIVAKTPEEAYQAAKKLNTEDLVIKAQVLAGGRGKGHFDSGLQGGVKLCYTPEQVKDYASKMLGHKLITKQTGAAGRDCNAVYVVERQYAAREYYFAILLDRATRGPVLVASSEGGVEIEEVAKTNPDAILTVPFSIKTGLTREVALDTAKKMGFTEKCVPQAADTFMKLYKIFIEKDATMVEINPMAENNRGEVVCMDAKFGFDDNASYKPKGIFALRDTTQEDPREVAGHAKWNLNYVGMEGNIGCLVNGAGLAMATMDIIKLNGGVPANFLDVGGSATAKQVKEAFKIISSDKAVSAILVNIFGGIMRCDIVAEGVIQAVKELGLDIPLVVRLQGTKVEEARELIKNSNLSLYAIDDLDKAAKKVVQLANVVGLAKENGIKIKIEN</sequence>
<comment type="function">
    <text evidence="1">Succinyl-CoA synthetase functions in the citric acid cycle (TCA), coupling the hydrolysis of succinyl-CoA to the synthesis of ATP and thus represents the only step of substrate-level phosphorylation in the TCA. The beta subunit provides nucleotide specificity of the enzyme and binds the substrate succinate, while the binding sites for coenzyme A and phosphate are found in the alpha subunit.</text>
</comment>
<comment type="catalytic activity">
    <reaction evidence="1">
        <text>succinate + ATP + CoA = succinyl-CoA + ADP + phosphate</text>
        <dbReference type="Rhea" id="RHEA:17661"/>
        <dbReference type="ChEBI" id="CHEBI:30031"/>
        <dbReference type="ChEBI" id="CHEBI:30616"/>
        <dbReference type="ChEBI" id="CHEBI:43474"/>
        <dbReference type="ChEBI" id="CHEBI:57287"/>
        <dbReference type="ChEBI" id="CHEBI:57292"/>
        <dbReference type="ChEBI" id="CHEBI:456216"/>
        <dbReference type="EC" id="6.2.1.5"/>
    </reaction>
</comment>
<comment type="cofactor">
    <cofactor evidence="1">
        <name>Mg(2+)</name>
        <dbReference type="ChEBI" id="CHEBI:18420"/>
    </cofactor>
    <text evidence="1">Binds 1 Mg(2+) ion per subunit.</text>
</comment>
<comment type="pathway">
    <text evidence="1">Carbohydrate metabolism; tricarboxylic acid cycle; succinate from succinyl-CoA (ligase route): step 1/1.</text>
</comment>
<comment type="subunit">
    <text evidence="1">Heterodimer of an alpha and a beta subunit.</text>
</comment>
<comment type="subcellular location">
    <subcellularLocation>
        <location evidence="2">Hydrogenosome</location>
    </subcellularLocation>
</comment>
<comment type="similarity">
    <text evidence="1">Belongs to the succinate/malate CoA ligase beta subunit family.</text>
</comment>
<keyword id="KW-0067">ATP-binding</keyword>
<keyword id="KW-0377">Hydrogenosome</keyword>
<keyword id="KW-0436">Ligase</keyword>
<keyword id="KW-0460">Magnesium</keyword>
<keyword id="KW-0479">Metal-binding</keyword>
<keyword id="KW-0547">Nucleotide-binding</keyword>
<keyword id="KW-0809">Transit peptide</keyword>
<keyword id="KW-0816">Tricarboxylic acid cycle</keyword>
<proteinExistence type="evidence at transcript level"/>
<reference key="1">
    <citation type="journal article" date="1996" name="Mol. Gen. Genet.">
        <title>scsB, a cDNA encoding the hydrogenosomal beta subunit of succinyl-CoA synthetase fom the anerobic fungus Neocallimastix frontalis.</title>
        <authorList>
            <person name="Brondijk T.H.C."/>
            <person name="van der Giezen M."/>
            <person name="Gottschal J.C."/>
            <person name="Prins R.A."/>
            <person name="Fevre M."/>
        </authorList>
    </citation>
    <scope>NUCLEOTIDE SEQUENCE [MRNA]</scope>
    <scope>SUBCELLULAR LOCATION</scope>
    <source>
        <strain>MCH3</strain>
    </source>
</reference>
<name>SUCB_NEOFR</name>
<gene>
    <name evidence="3" type="primary">SCSB</name>
</gene>